<reference key="1">
    <citation type="journal article" date="1998" name="Plant Cell">
        <title>Two transcription factors, DREB1 and DREB2, with an EREBP/AP2 DNA binding domain separate two cellular signal transduction pathways in drought- and low-temperature-responsive gene expression, respectively, in Arabidopsis.</title>
        <authorList>
            <person name="Liu Q."/>
            <person name="Kasuga M."/>
            <person name="Sakuma Y."/>
            <person name="Abe H."/>
            <person name="Miura S."/>
            <person name="Yamaguchi-Shinozaki K."/>
            <person name="Shinozaki K."/>
        </authorList>
    </citation>
    <scope>NUCLEOTIDE SEQUENCE [MRNA]</scope>
    <source>
        <strain>cv. Columbia</strain>
    </source>
</reference>
<reference key="2">
    <citation type="journal article" date="1998" name="Biochem. Biophys. Res. Commun.">
        <title>An Arabidopsis gene family encoding DRE/CRT binding proteins involved in low-temperature -responsive gene expression.</title>
        <authorList>
            <person name="Shinwari Z.K."/>
            <person name="Nakashima K."/>
            <person name="Miura S."/>
            <person name="Kasuga M."/>
            <person name="Seki M."/>
            <person name="Yamaguchi-Shinozaki K."/>
            <person name="Shinozaki K."/>
        </authorList>
    </citation>
    <scope>NUCLEOTIDE SEQUENCE [GENOMIC DNA]</scope>
    <scope>TISSUE SPECIFICITY</scope>
    <scope>INDUCTION</scope>
    <source>
        <strain>cv. Columbia</strain>
    </source>
</reference>
<reference key="3">
    <citation type="journal article" date="1998" name="Plant J.">
        <title>Low temperature regulation of the Arabidopsis CBF family of AP2 transcriptional activators as an early step in cold-induced COR gene expression.</title>
        <authorList>
            <person name="Gilmour S.J."/>
            <person name="Zarka D.G."/>
            <person name="Stockinger E.J."/>
            <person name="Salazar M.P."/>
            <person name="Houghton J.M."/>
            <person name="Thomashow M.F."/>
        </authorList>
    </citation>
    <scope>NUCLEOTIDE SEQUENCE [GENOMIC DNA / MRNA]</scope>
    <source>
        <strain>cv. Columbia</strain>
        <strain>cv. Landsberg erecta</strain>
    </source>
</reference>
<reference key="4">
    <citation type="journal article" date="1999" name="Plant Physiol.">
        <title>The Arabidopsis CBF gene family is composed of three genes encoding AP2 domain-containing proteins whose expression is regulated by low temperature but not by abscisic acid or dehydration.</title>
        <authorList>
            <person name="Medina J."/>
            <person name="Bargues M."/>
            <person name="Terol J."/>
            <person name="Perez-Alonso M."/>
            <person name="Salinas J."/>
        </authorList>
    </citation>
    <scope>NUCLEOTIDE SEQUENCE [GENOMIC DNA / MRNA]</scope>
    <scope>INDUCTION</scope>
    <source>
        <strain>cv. Columbia</strain>
    </source>
</reference>
<reference key="5">
    <citation type="journal article" date="2005" name="Plant Physiol.">
        <title>Genetic and molecular analyses of natural variation indicate CBF2 as a candidate gene for underlying a freezing tolerance quantitative trait locus in Arabidopsis.</title>
        <authorList>
            <person name="Alonso-Blanco C."/>
            <person name="Gomez-Mena C."/>
            <person name="Llorente F."/>
            <person name="Koornneef M."/>
            <person name="Salinas J."/>
            <person name="Martinez-Zapater J.M."/>
        </authorList>
    </citation>
    <scope>NUCLEOTIDE SEQUENCE [GENOMIC DNA]</scope>
    <scope>FUNCTION</scope>
    <scope>VARIANT THR-49</scope>
    <source>
        <strain>cv. Cvi-1</strain>
    </source>
</reference>
<reference key="6">
    <citation type="journal article" date="1999" name="Nature">
        <title>Sequence and analysis of chromosome 4 of the plant Arabidopsis thaliana.</title>
        <authorList>
            <person name="Mayer K.F.X."/>
            <person name="Schueller C."/>
            <person name="Wambutt R."/>
            <person name="Murphy G."/>
            <person name="Volckaert G."/>
            <person name="Pohl T."/>
            <person name="Duesterhoeft A."/>
            <person name="Stiekema W."/>
            <person name="Entian K.-D."/>
            <person name="Terryn N."/>
            <person name="Harris B."/>
            <person name="Ansorge W."/>
            <person name="Brandt P."/>
            <person name="Grivell L.A."/>
            <person name="Rieger M."/>
            <person name="Weichselgartner M."/>
            <person name="de Simone V."/>
            <person name="Obermaier B."/>
            <person name="Mache R."/>
            <person name="Mueller M."/>
            <person name="Kreis M."/>
            <person name="Delseny M."/>
            <person name="Puigdomenech P."/>
            <person name="Watson M."/>
            <person name="Schmidtheini T."/>
            <person name="Reichert B."/>
            <person name="Portetelle D."/>
            <person name="Perez-Alonso M."/>
            <person name="Boutry M."/>
            <person name="Bancroft I."/>
            <person name="Vos P."/>
            <person name="Hoheisel J."/>
            <person name="Zimmermann W."/>
            <person name="Wedler H."/>
            <person name="Ridley P."/>
            <person name="Langham S.-A."/>
            <person name="McCullagh B."/>
            <person name="Bilham L."/>
            <person name="Robben J."/>
            <person name="van der Schueren J."/>
            <person name="Grymonprez B."/>
            <person name="Chuang Y.-J."/>
            <person name="Vandenbussche F."/>
            <person name="Braeken M."/>
            <person name="Weltjens I."/>
            <person name="Voet M."/>
            <person name="Bastiaens I."/>
            <person name="Aert R."/>
            <person name="Defoor E."/>
            <person name="Weitzenegger T."/>
            <person name="Bothe G."/>
            <person name="Ramsperger U."/>
            <person name="Hilbert H."/>
            <person name="Braun M."/>
            <person name="Holzer E."/>
            <person name="Brandt A."/>
            <person name="Peters S."/>
            <person name="van Staveren M."/>
            <person name="Dirkse W."/>
            <person name="Mooijman P."/>
            <person name="Klein Lankhorst R."/>
            <person name="Rose M."/>
            <person name="Hauf J."/>
            <person name="Koetter P."/>
            <person name="Berneiser S."/>
            <person name="Hempel S."/>
            <person name="Feldpausch M."/>
            <person name="Lamberth S."/>
            <person name="Van den Daele H."/>
            <person name="De Keyser A."/>
            <person name="Buysshaert C."/>
            <person name="Gielen J."/>
            <person name="Villarroel R."/>
            <person name="De Clercq R."/>
            <person name="van Montagu M."/>
            <person name="Rogers J."/>
            <person name="Cronin A."/>
            <person name="Quail M.A."/>
            <person name="Bray-Allen S."/>
            <person name="Clark L."/>
            <person name="Doggett J."/>
            <person name="Hall S."/>
            <person name="Kay M."/>
            <person name="Lennard N."/>
            <person name="McLay K."/>
            <person name="Mayes R."/>
            <person name="Pettett A."/>
            <person name="Rajandream M.A."/>
            <person name="Lyne M."/>
            <person name="Benes V."/>
            <person name="Rechmann S."/>
            <person name="Borkova D."/>
            <person name="Bloecker H."/>
            <person name="Scharfe M."/>
            <person name="Grimm M."/>
            <person name="Loehnert T.-H."/>
            <person name="Dose S."/>
            <person name="de Haan M."/>
            <person name="Maarse A.C."/>
            <person name="Schaefer M."/>
            <person name="Mueller-Auer S."/>
            <person name="Gabel C."/>
            <person name="Fuchs M."/>
            <person name="Fartmann B."/>
            <person name="Granderath K."/>
            <person name="Dauner D."/>
            <person name="Herzl A."/>
            <person name="Neumann S."/>
            <person name="Argiriou A."/>
            <person name="Vitale D."/>
            <person name="Liguori R."/>
            <person name="Piravandi E."/>
            <person name="Massenet O."/>
            <person name="Quigley F."/>
            <person name="Clabauld G."/>
            <person name="Muendlein A."/>
            <person name="Felber R."/>
            <person name="Schnabl S."/>
            <person name="Hiller R."/>
            <person name="Schmidt W."/>
            <person name="Lecharny A."/>
            <person name="Aubourg S."/>
            <person name="Chefdor F."/>
            <person name="Cooke R."/>
            <person name="Berger C."/>
            <person name="Monfort A."/>
            <person name="Casacuberta E."/>
            <person name="Gibbons T."/>
            <person name="Weber N."/>
            <person name="Vandenbol M."/>
            <person name="Bargues M."/>
            <person name="Terol J."/>
            <person name="Torres A."/>
            <person name="Perez-Perez A."/>
            <person name="Purnelle B."/>
            <person name="Bent E."/>
            <person name="Johnson S."/>
            <person name="Tacon D."/>
            <person name="Jesse T."/>
            <person name="Heijnen L."/>
            <person name="Schwarz S."/>
            <person name="Scholler P."/>
            <person name="Heber S."/>
            <person name="Francs P."/>
            <person name="Bielke C."/>
            <person name="Frishman D."/>
            <person name="Haase D."/>
            <person name="Lemcke K."/>
            <person name="Mewes H.-W."/>
            <person name="Stocker S."/>
            <person name="Zaccaria P."/>
            <person name="Bevan M."/>
            <person name="Wilson R.K."/>
            <person name="de la Bastide M."/>
            <person name="Habermann K."/>
            <person name="Parnell L."/>
            <person name="Dedhia N."/>
            <person name="Gnoj L."/>
            <person name="Schutz K."/>
            <person name="Huang E."/>
            <person name="Spiegel L."/>
            <person name="Sekhon M."/>
            <person name="Murray J."/>
            <person name="Sheet P."/>
            <person name="Cordes M."/>
            <person name="Abu-Threideh J."/>
            <person name="Stoneking T."/>
            <person name="Kalicki J."/>
            <person name="Graves T."/>
            <person name="Harmon G."/>
            <person name="Edwards J."/>
            <person name="Latreille P."/>
            <person name="Courtney L."/>
            <person name="Cloud J."/>
            <person name="Abbott A."/>
            <person name="Scott K."/>
            <person name="Johnson D."/>
            <person name="Minx P."/>
            <person name="Bentley D."/>
            <person name="Fulton B."/>
            <person name="Miller N."/>
            <person name="Greco T."/>
            <person name="Kemp K."/>
            <person name="Kramer J."/>
            <person name="Fulton L."/>
            <person name="Mardis E."/>
            <person name="Dante M."/>
            <person name="Pepin K."/>
            <person name="Hillier L.W."/>
            <person name="Nelson J."/>
            <person name="Spieth J."/>
            <person name="Ryan E."/>
            <person name="Andrews S."/>
            <person name="Geisel C."/>
            <person name="Layman D."/>
            <person name="Du H."/>
            <person name="Ali J."/>
            <person name="Berghoff A."/>
            <person name="Jones K."/>
            <person name="Drone K."/>
            <person name="Cotton M."/>
            <person name="Joshu C."/>
            <person name="Antonoiu B."/>
            <person name="Zidanic M."/>
            <person name="Strong C."/>
            <person name="Sun H."/>
            <person name="Lamar B."/>
            <person name="Yordan C."/>
            <person name="Ma P."/>
            <person name="Zhong J."/>
            <person name="Preston R."/>
            <person name="Vil D."/>
            <person name="Shekher M."/>
            <person name="Matero A."/>
            <person name="Shah R."/>
            <person name="Swaby I.K."/>
            <person name="O'Shaughnessy A."/>
            <person name="Rodriguez M."/>
            <person name="Hoffman J."/>
            <person name="Till S."/>
            <person name="Granat S."/>
            <person name="Shohdy N."/>
            <person name="Hasegawa A."/>
            <person name="Hameed A."/>
            <person name="Lodhi M."/>
            <person name="Johnson A."/>
            <person name="Chen E."/>
            <person name="Marra M.A."/>
            <person name="Martienssen R."/>
            <person name="McCombie W.R."/>
        </authorList>
    </citation>
    <scope>NUCLEOTIDE SEQUENCE [LARGE SCALE GENOMIC DNA]</scope>
    <source>
        <strain>cv. Columbia</strain>
    </source>
</reference>
<reference key="7">
    <citation type="journal article" date="2017" name="Plant J.">
        <title>Araport11: a complete reannotation of the Arabidopsis thaliana reference genome.</title>
        <authorList>
            <person name="Cheng C.Y."/>
            <person name="Krishnakumar V."/>
            <person name="Chan A.P."/>
            <person name="Thibaud-Nissen F."/>
            <person name="Schobel S."/>
            <person name="Town C.D."/>
        </authorList>
    </citation>
    <scope>GENOME REANNOTATION</scope>
    <source>
        <strain>cv. Columbia</strain>
    </source>
</reference>
<reference key="8">
    <citation type="submission" date="2006-09" db="EMBL/GenBank/DDBJ databases">
        <title>Arabidopsis ORF clones.</title>
        <authorList>
            <person name="Bautista V.R."/>
            <person name="Kim C.J."/>
            <person name="Chen H."/>
            <person name="Quinitio C."/>
            <person name="Ecker J.R."/>
        </authorList>
    </citation>
    <scope>NUCLEOTIDE SEQUENCE [LARGE SCALE MRNA]</scope>
    <source>
        <strain>cv. Columbia</strain>
    </source>
</reference>
<reference key="9">
    <citation type="journal article" date="2002" name="Biochem. Biophys. Res. Commun.">
        <title>DNA-binding specificity of the ERF/AP2 domain of Arabidopsis DREBs, transcription factors involved in dehydration- and cold-inducible gene expression.</title>
        <authorList>
            <person name="Sakuma Y."/>
            <person name="Liu Q."/>
            <person name="Dubouzet J.G."/>
            <person name="Abe H."/>
            <person name="Shinozaki K."/>
            <person name="Yamaguchi-Shinozaki K."/>
        </authorList>
    </citation>
    <scope>GENE FAMILY</scope>
    <scope>FUNCTION</scope>
</reference>
<reference key="10">
    <citation type="journal article" date="2006" name="Plant Physiol.">
        <title>Genome-wide analysis of the ERF gene family in Arabidopsis and rice.</title>
        <authorList>
            <person name="Nakano T."/>
            <person name="Suzuki K."/>
            <person name="Fujimura T."/>
            <person name="Shinshi H."/>
        </authorList>
    </citation>
    <scope>GENE FAMILY</scope>
    <scope>NOMENCLATURE</scope>
</reference>
<keyword id="KW-0010">Activator</keyword>
<keyword id="KW-0238">DNA-binding</keyword>
<keyword id="KW-0539">Nucleus</keyword>
<keyword id="KW-1185">Reference proteome</keyword>
<keyword id="KW-0346">Stress response</keyword>
<keyword id="KW-0804">Transcription</keyword>
<keyword id="KW-0805">Transcription regulation</keyword>
<organism>
    <name type="scientific">Arabidopsis thaliana</name>
    <name type="common">Mouse-ear cress</name>
    <dbReference type="NCBI Taxonomy" id="3702"/>
    <lineage>
        <taxon>Eukaryota</taxon>
        <taxon>Viridiplantae</taxon>
        <taxon>Streptophyta</taxon>
        <taxon>Embryophyta</taxon>
        <taxon>Tracheophyta</taxon>
        <taxon>Spermatophyta</taxon>
        <taxon>Magnoliopsida</taxon>
        <taxon>eudicotyledons</taxon>
        <taxon>Gunneridae</taxon>
        <taxon>Pentapetalae</taxon>
        <taxon>rosids</taxon>
        <taxon>malvids</taxon>
        <taxon>Brassicales</taxon>
        <taxon>Brassicaceae</taxon>
        <taxon>Camelineae</taxon>
        <taxon>Arabidopsis</taxon>
    </lineage>
</organism>
<evidence type="ECO:0000255" key="1"/>
<evidence type="ECO:0000255" key="2">
    <source>
        <dbReference type="PROSITE-ProRule" id="PRU00366"/>
    </source>
</evidence>
<evidence type="ECO:0000256" key="3">
    <source>
        <dbReference type="SAM" id="MobiDB-lite"/>
    </source>
</evidence>
<evidence type="ECO:0000269" key="4">
    <source>
    </source>
</evidence>
<evidence type="ECO:0000269" key="5">
    <source>
    </source>
</evidence>
<evidence type="ECO:0000269" key="6">
    <source>
    </source>
</evidence>
<evidence type="ECO:0000269" key="7">
    <source>
    </source>
</evidence>
<evidence type="ECO:0000305" key="8"/>
<sequence length="216" mass="24264">MNSFSAFSEMFGSDYESPVSSGGDYSPKLATSCPKKPAGRKKFRETRHPIYRGVRQRNSGKWVCELREPNKKTRIWLGTFQTAEMAARAHDVAAIALRGRSACLNFADSAWRLRIPESTCAKEIQKAAAEAALNFQDEMCHMTTDAHGLDMEETLVEAIYTPEQSQDAFYMDEEAMLGMSSLLDNMAEGMLLPSPSVQWNYNFDVEGDDDVSLWSY</sequence>
<comment type="function">
    <text evidence="4 5">Transcriptional activator that binds specifically to the DNA sequence 5'-[AG]CCGAC-3'. Binding to the C-repeat/DRE element mediates cold-inducible transcription. CBF/DREB1 factors play a key role in freezing tolerance and cold acclimation.</text>
</comment>
<comment type="interaction">
    <interactant intactId="EBI-15198565">
        <id>Q9SYS6</id>
    </interactant>
    <interactant intactId="EBI-25516637">
        <id>Q6NM52</id>
        <label>DL3925W</label>
    </interactant>
    <organismsDiffer>false</organismsDiffer>
    <experiments>3</experiments>
</comment>
<comment type="subcellular location">
    <subcellularLocation>
        <location evidence="8">Nucleus</location>
    </subcellularLocation>
</comment>
<comment type="tissue specificity">
    <text evidence="6">Expressed in leaves and roots.</text>
</comment>
<comment type="induction">
    <text evidence="6 7">By cold stress.</text>
</comment>
<comment type="similarity">
    <text evidence="8">Belongs to the AP2/ERF transcription factor family. ERF subfamily.</text>
</comment>
<gene>
    <name type="primary">DREB1C</name>
    <name type="synonym">CBF2</name>
    <name type="synonym">ERF030</name>
    <name type="ordered locus">At4g25470</name>
    <name type="ORF">M7J2.161</name>
</gene>
<name>DRE1C_ARATH</name>
<proteinExistence type="evidence at protein level"/>
<feature type="chain" id="PRO_0000112530" description="Dehydration-responsive element-binding protein 1C">
    <location>
        <begin position="1"/>
        <end position="216"/>
    </location>
</feature>
<feature type="DNA-binding region" description="AP2/ERF" evidence="2">
    <location>
        <begin position="50"/>
        <end position="107"/>
    </location>
</feature>
<feature type="region of interest" description="Disordered" evidence="3">
    <location>
        <begin position="15"/>
        <end position="42"/>
    </location>
</feature>
<feature type="short sequence motif" description="Nuclear localization signal" evidence="1">
    <location>
        <begin position="35"/>
        <end position="47"/>
    </location>
</feature>
<feature type="sequence variant" description="In strain: cv. Cvi-1." evidence="5">
    <original>P</original>
    <variation>T</variation>
    <location>
        <position position="49"/>
    </location>
</feature>
<feature type="sequence conflict" description="In Ref. 3; AAC99371." evidence="8" ref="3">
    <original>F</original>
    <variation>C</variation>
    <location>
        <position position="4"/>
    </location>
</feature>
<dbReference type="EMBL" id="AB007789">
    <property type="protein sequence ID" value="BAA33793.1"/>
    <property type="molecule type" value="mRNA"/>
</dbReference>
<dbReference type="EMBL" id="AB013817">
    <property type="protein sequence ID" value="BAA33436.1"/>
    <property type="molecule type" value="Genomic_DNA"/>
</dbReference>
<dbReference type="EMBL" id="AF074601">
    <property type="protein sequence ID" value="AAD15976.1"/>
    <property type="molecule type" value="mRNA"/>
</dbReference>
<dbReference type="EMBL" id="AF076155">
    <property type="protein sequence ID" value="AAC99371.1"/>
    <property type="molecule type" value="Genomic_DNA"/>
</dbReference>
<dbReference type="EMBL" id="AF062925">
    <property type="protein sequence ID" value="AAC78647.1"/>
    <property type="molecule type" value="Genomic_DNA"/>
</dbReference>
<dbReference type="EMBL" id="AY667247">
    <property type="protein sequence ID" value="AAV80415.1"/>
    <property type="molecule type" value="Genomic_DNA"/>
</dbReference>
<dbReference type="EMBL" id="AL022197">
    <property type="protein sequence ID" value="CAB51470.1"/>
    <property type="molecule type" value="Genomic_DNA"/>
</dbReference>
<dbReference type="EMBL" id="AL161563">
    <property type="protein sequence ID" value="CAB81357.1"/>
    <property type="molecule type" value="Genomic_DNA"/>
</dbReference>
<dbReference type="EMBL" id="CP002687">
    <property type="protein sequence ID" value="AEE85064.1"/>
    <property type="molecule type" value="Genomic_DNA"/>
</dbReference>
<dbReference type="EMBL" id="BT028991">
    <property type="protein sequence ID" value="ABI93900.1"/>
    <property type="molecule type" value="mRNA"/>
</dbReference>
<dbReference type="PIR" id="JE0299">
    <property type="entry name" value="JE0299"/>
</dbReference>
<dbReference type="RefSeq" id="NP_567719.1">
    <property type="nucleotide sequence ID" value="NM_118679.2"/>
</dbReference>
<dbReference type="SMR" id="Q9SYS6"/>
<dbReference type="BioGRID" id="13938">
    <property type="interactions" value="4"/>
</dbReference>
<dbReference type="FunCoup" id="Q9SYS6">
    <property type="interactions" value="24"/>
</dbReference>
<dbReference type="IntAct" id="Q9SYS6">
    <property type="interactions" value="5"/>
</dbReference>
<dbReference type="STRING" id="3702.Q9SYS6"/>
<dbReference type="PaxDb" id="3702-AT4G25470.1"/>
<dbReference type="EnsemblPlants" id="AT4G25470.1">
    <property type="protein sequence ID" value="AT4G25470.1"/>
    <property type="gene ID" value="AT4G25470"/>
</dbReference>
<dbReference type="GeneID" id="828651"/>
<dbReference type="Gramene" id="AT4G25470.1">
    <property type="protein sequence ID" value="AT4G25470.1"/>
    <property type="gene ID" value="AT4G25470"/>
</dbReference>
<dbReference type="KEGG" id="ath:AT4G25470"/>
<dbReference type="Araport" id="AT4G25470"/>
<dbReference type="TAIR" id="AT4G25470">
    <property type="gene designation" value="CBF2"/>
</dbReference>
<dbReference type="eggNOG" id="ENOG502QQ5M">
    <property type="taxonomic scope" value="Eukaryota"/>
</dbReference>
<dbReference type="HOGENOM" id="CLU_063331_1_0_1"/>
<dbReference type="InParanoid" id="Q9SYS6"/>
<dbReference type="OMA" id="RFEHNYD"/>
<dbReference type="PhylomeDB" id="Q9SYS6"/>
<dbReference type="PRO" id="PR:Q9SYS6"/>
<dbReference type="Proteomes" id="UP000006548">
    <property type="component" value="Chromosome 4"/>
</dbReference>
<dbReference type="ExpressionAtlas" id="Q9SYS6">
    <property type="expression patterns" value="baseline and differential"/>
</dbReference>
<dbReference type="GO" id="GO:0005634">
    <property type="term" value="C:nucleus"/>
    <property type="evidence" value="ECO:0007669"/>
    <property type="project" value="UniProtKB-SubCell"/>
</dbReference>
<dbReference type="GO" id="GO:0003700">
    <property type="term" value="F:DNA-binding transcription factor activity"/>
    <property type="evidence" value="ECO:0000250"/>
    <property type="project" value="TAIR"/>
</dbReference>
<dbReference type="GO" id="GO:0000976">
    <property type="term" value="F:transcription cis-regulatory region binding"/>
    <property type="evidence" value="ECO:0000353"/>
    <property type="project" value="TAIR"/>
</dbReference>
<dbReference type="GO" id="GO:0009631">
    <property type="term" value="P:cold acclimation"/>
    <property type="evidence" value="ECO:0000315"/>
    <property type="project" value="TAIR"/>
</dbReference>
<dbReference type="GO" id="GO:0009409">
    <property type="term" value="P:response to cold"/>
    <property type="evidence" value="ECO:0000270"/>
    <property type="project" value="TAIR"/>
</dbReference>
<dbReference type="CDD" id="cd00018">
    <property type="entry name" value="AP2"/>
    <property type="match status" value="1"/>
</dbReference>
<dbReference type="FunFam" id="3.30.730.10:FF:000001">
    <property type="entry name" value="Ethylene-responsive transcription factor 2"/>
    <property type="match status" value="1"/>
</dbReference>
<dbReference type="Gene3D" id="3.30.730.10">
    <property type="entry name" value="AP2/ERF domain"/>
    <property type="match status" value="1"/>
</dbReference>
<dbReference type="InterPro" id="IPR001471">
    <property type="entry name" value="AP2/ERF_dom"/>
</dbReference>
<dbReference type="InterPro" id="IPR036955">
    <property type="entry name" value="AP2/ERF_dom_sf"/>
</dbReference>
<dbReference type="InterPro" id="IPR016177">
    <property type="entry name" value="DNA-bd_dom_sf"/>
</dbReference>
<dbReference type="InterPro" id="IPR045277">
    <property type="entry name" value="DRE1A-I"/>
</dbReference>
<dbReference type="PANTHER" id="PTHR31839:SF23">
    <property type="entry name" value="DEHYDRATION-RESPONSIVE ELEMENT-BINDING PROTEIN 1A-RELATED"/>
    <property type="match status" value="1"/>
</dbReference>
<dbReference type="PANTHER" id="PTHR31839">
    <property type="entry name" value="DEHYDRATION-RESPONSIVE ELEMENT-BINDING PROTEIN 1D"/>
    <property type="match status" value="1"/>
</dbReference>
<dbReference type="Pfam" id="PF00847">
    <property type="entry name" value="AP2"/>
    <property type="match status" value="1"/>
</dbReference>
<dbReference type="PRINTS" id="PR00367">
    <property type="entry name" value="ETHRSPELEMNT"/>
</dbReference>
<dbReference type="SMART" id="SM00380">
    <property type="entry name" value="AP2"/>
    <property type="match status" value="1"/>
</dbReference>
<dbReference type="SUPFAM" id="SSF54171">
    <property type="entry name" value="DNA-binding domain"/>
    <property type="match status" value="1"/>
</dbReference>
<dbReference type="PROSITE" id="PS51032">
    <property type="entry name" value="AP2_ERF"/>
    <property type="match status" value="1"/>
</dbReference>
<accession>Q9SYS6</accession>
<accession>O65613</accession>
<accession>O82776</accession>
<accession>Q08A88</accession>
<accession>Q5QE69</accession>
<protein>
    <recommendedName>
        <fullName>Dehydration-responsive element-binding protein 1C</fullName>
        <shortName>Protein DREB1C</shortName>
    </recommendedName>
    <alternativeName>
        <fullName>C-repeat/dehydration-responsive element-binding factor 2</fullName>
        <shortName>C-repeat-binding factor 2</shortName>
        <shortName>CRT/DRE-binding factor 2</shortName>
    </alternativeName>
</protein>